<gene>
    <name type="primary">pstP</name>
    <name evidence="17" type="synonym">mstp</name>
    <name type="synonym">ppp</name>
    <name type="ordered locus">Rv0018c</name>
</gene>
<protein>
    <recommendedName>
        <fullName evidence="18">Serine/threonine protein phosphatase PstP</fullName>
        <ecNumber evidence="4 5 7">3.1.3.16</ecNumber>
    </recommendedName>
    <alternativeName>
        <fullName evidence="17">Mycobacterial Ser/Thr phosphatase</fullName>
        <shortName evidence="17">Mstp</shortName>
    </alternativeName>
    <alternativeName>
        <fullName>PP2C-family Ser/Thr phosphatase</fullName>
    </alternativeName>
</protein>
<organism>
    <name type="scientific">Mycobacterium tuberculosis (strain ATCC 25618 / H37Rv)</name>
    <dbReference type="NCBI Taxonomy" id="83332"/>
    <lineage>
        <taxon>Bacteria</taxon>
        <taxon>Bacillati</taxon>
        <taxon>Actinomycetota</taxon>
        <taxon>Actinomycetes</taxon>
        <taxon>Mycobacteriales</taxon>
        <taxon>Mycobacteriaceae</taxon>
        <taxon>Mycobacterium</taxon>
        <taxon>Mycobacterium tuberculosis complex</taxon>
    </lineage>
</organism>
<name>PSTP_MYCTU</name>
<comment type="function">
    <text evidence="4 5 7 8 9 12 13 14 15 16">Plays an important role in regulating cell division and growth by reversible phosphorylation signaling (PubMed:12950916, PubMed:14575702, PubMed:27758870). May play important roles in regulating cellular metabolism and signaling pathways, which could mediate the growth and development of the cell (PubMed:31958639). Plays a role in establishing and maintaining infection (PubMed:27758870). Dephosphorylates several proteins, including the kinases PknA, PknB, PknD, PknE, PknF, PknH, PknJ and Pyk, the transcriptional regulatory proteins EmbR and EthR, the osmosensory protein OprA and the dimycocerosyl transferase PapA5 (PubMed:12950916, PubMed:14575702, PubMed:15967413, PubMed:16817899, PubMed:17411339, PubMed:19826007, PubMed:20520732, PubMed:21423706, PubMed:31958639). In vitro, dephosphorylates the phosphorylated Ser/Thr residues of myelin basic protein (MBP), histone and casein phosphorylated at Ser/Thr residues, but fails to dephosphorylate phosphotyrosine residue of these substrates (PubMed:12950916, PubMed:14575702).</text>
</comment>
<comment type="catalytic activity">
    <reaction evidence="4 5 7">
        <text>O-phospho-L-seryl-[protein] + H2O = L-seryl-[protein] + phosphate</text>
        <dbReference type="Rhea" id="RHEA:20629"/>
        <dbReference type="Rhea" id="RHEA-COMP:9863"/>
        <dbReference type="Rhea" id="RHEA-COMP:11604"/>
        <dbReference type="ChEBI" id="CHEBI:15377"/>
        <dbReference type="ChEBI" id="CHEBI:29999"/>
        <dbReference type="ChEBI" id="CHEBI:43474"/>
        <dbReference type="ChEBI" id="CHEBI:83421"/>
        <dbReference type="EC" id="3.1.3.16"/>
    </reaction>
</comment>
<comment type="catalytic activity">
    <reaction evidence="4 5 7">
        <text>O-phospho-L-threonyl-[protein] + H2O = L-threonyl-[protein] + phosphate</text>
        <dbReference type="Rhea" id="RHEA:47004"/>
        <dbReference type="Rhea" id="RHEA-COMP:11060"/>
        <dbReference type="Rhea" id="RHEA-COMP:11605"/>
        <dbReference type="ChEBI" id="CHEBI:15377"/>
        <dbReference type="ChEBI" id="CHEBI:30013"/>
        <dbReference type="ChEBI" id="CHEBI:43474"/>
        <dbReference type="ChEBI" id="CHEBI:61977"/>
        <dbReference type="EC" id="3.1.3.16"/>
    </reaction>
</comment>
<comment type="cofactor">
    <cofactor evidence="5 6 10">
        <name>Mn(2+)</name>
        <dbReference type="ChEBI" id="CHEBI:29035"/>
    </cofactor>
    <text evidence="6 10">Binds 3 Mn(2+) ions per subunit (PubMed:15530359). The third manganese ion is unlikely to be involved in catalysis but contributes instead to stabilize a flap segment, which is partially disordered in the absence of bound metal (PubMed:17961594).</text>
</comment>
<comment type="activity regulation">
    <text evidence="5 14">Activity is modulated by phosphorylation (PubMed:21423706). Phosphorylated phosphatase is more active than its unphosphorylated equivalent (PubMed:21423706). Inhibited partially by NaF and cyclosporine (PubMed:14575702). Also inhibited by zinc ions and inorganic phosphate (PubMed:21423706).</text>
</comment>
<comment type="subunit">
    <text evidence="16">78 interactors between PstP and Mtb proteins were identified using Mtb proteome microarray, including proteins involved in diverse aspects of cellular pathways and biological processes, which contain cellular metabolic process, biosynthetic process, gene expression and transcription regulation processes (PubMed:31958639). Interacts with EthR and may interfere with its DNA binding activity (PubMed:31958639).</text>
</comment>
<comment type="subcellular location">
    <subcellularLocation>
        <location evidence="19">Cell membrane</location>
        <topology evidence="1">Single-pass membrane protein</topology>
    </subcellularLocation>
</comment>
<comment type="PTM">
    <text evidence="14">Phosphorylated on several threonine residues by PknA and PknB.</text>
</comment>
<comment type="disruption phenotype">
    <text evidence="15">Depletion of PstP compromises mycobacterial growth and causes marginal elongation of cells. Depletion of PstP in M.tuberculosis negatively impacts its survival in mice and decreases the bacillary load even in an established infection.</text>
</comment>
<comment type="miscellaneous">
    <text evidence="15">Overexpression leads to elongated cells and partially compromised survival.</text>
</comment>
<comment type="miscellaneous">
    <text evidence="11">Was identified as a high-confidence drug target.</text>
</comment>
<comment type="caution">
    <text evidence="19">It is uncertain whether Met-1 or Val-4 is the initiator.</text>
</comment>
<comment type="caution">
    <text evidence="20 21">Was reported to dephosphorylate the penicillin-binding protein PBPA. However, this publication has been retracted because the published versions of some figures were modified prior to publication.</text>
</comment>
<reference key="1">
    <citation type="journal article" date="1998" name="Nature">
        <title>Deciphering the biology of Mycobacterium tuberculosis from the complete genome sequence.</title>
        <authorList>
            <person name="Cole S.T."/>
            <person name="Brosch R."/>
            <person name="Parkhill J."/>
            <person name="Garnier T."/>
            <person name="Churcher C.M."/>
            <person name="Harris D.E."/>
            <person name="Gordon S.V."/>
            <person name="Eiglmeier K."/>
            <person name="Gas S."/>
            <person name="Barry C.E. III"/>
            <person name="Tekaia F."/>
            <person name="Badcock K."/>
            <person name="Basham D."/>
            <person name="Brown D."/>
            <person name="Chillingworth T."/>
            <person name="Connor R."/>
            <person name="Davies R.M."/>
            <person name="Devlin K."/>
            <person name="Feltwell T."/>
            <person name="Gentles S."/>
            <person name="Hamlin N."/>
            <person name="Holroyd S."/>
            <person name="Hornsby T."/>
            <person name="Jagels K."/>
            <person name="Krogh A."/>
            <person name="McLean J."/>
            <person name="Moule S."/>
            <person name="Murphy L.D."/>
            <person name="Oliver S."/>
            <person name="Osborne J."/>
            <person name="Quail M.A."/>
            <person name="Rajandream M.A."/>
            <person name="Rogers J."/>
            <person name="Rutter S."/>
            <person name="Seeger K."/>
            <person name="Skelton S."/>
            <person name="Squares S."/>
            <person name="Squares R."/>
            <person name="Sulston J.E."/>
            <person name="Taylor K."/>
            <person name="Whitehead S."/>
            <person name="Barrell B.G."/>
        </authorList>
    </citation>
    <scope>NUCLEOTIDE SEQUENCE [LARGE SCALE GENOMIC DNA]</scope>
    <source>
        <strain>ATCC 25618 / H37Rv</strain>
    </source>
</reference>
<reference key="2">
    <citation type="journal article" date="2003" name="Biochem. Biophys. Res. Commun.">
        <title>Phosphoprotein phosphatase of Mycobacterium tuberculosis dephosphorylates serine-threonine kinases PknA and PknB.</title>
        <authorList>
            <person name="Chopra P."/>
            <person name="Singh B."/>
            <person name="Singh R."/>
            <person name="Vohra R."/>
            <person name="Koul A."/>
            <person name="Meena L.S."/>
            <person name="Koduri H."/>
            <person name="Ghildiyal M."/>
            <person name="Deol P."/>
            <person name="Das T.K."/>
            <person name="Tyagi A.K."/>
            <person name="Singh Y."/>
        </authorList>
    </citation>
    <scope>FUNCTION IN THE DEPHOSPHORYLATION OF PKNA AND PKNB</scope>
    <scope>CATALYTIC ACTIVITY</scope>
    <scope>COFACTOR</scope>
    <scope>ACTIVITY REGULATION</scope>
    <source>
        <strain>ATCC 25618 / H37Rv</strain>
    </source>
</reference>
<reference key="3">
    <citation type="journal article" date="2003" name="Mol. Microbiol.">
        <title>PknB kinase activity is regulated by phosphorylation in two Thr residues and dephosphorylation by PstP, the cognate phospho-Ser/Thr phosphatase, in Mycobacterium tuberculosis.</title>
        <authorList>
            <person name="Boitel B."/>
            <person name="Ortiz-Lombardia M."/>
            <person name="Duran R."/>
            <person name="Pompeo F."/>
            <person name="Cole S.T."/>
            <person name="Cervenansky C."/>
            <person name="Alzari P.M."/>
        </authorList>
    </citation>
    <scope>FUNCTION IN THE DEPHOSPHORYLATION OF PKNB</scope>
    <scope>CATALYTIC ACTIVITY</scope>
    <scope>DIVALENT CATION-DEPENDENCE</scope>
    <source>
        <strain>ATCC 25618 / H37Rv</strain>
    </source>
</reference>
<reference key="4">
    <citation type="journal article" date="2005" name="Biochem. Biophys. Res. Commun.">
        <title>Conserved autophosphorylation pattern in activation loops and juxtamembrane regions of Mycobacterium tuberculosis Ser/Thr protein kinases.</title>
        <authorList>
            <person name="Duran R."/>
            <person name="Villarino A."/>
            <person name="Bellinzoni M."/>
            <person name="Wehenkel A."/>
            <person name="Fernandez P."/>
            <person name="Boitel B."/>
            <person name="Cole S.T."/>
            <person name="Alzari P.M."/>
            <person name="Cervenansky C."/>
        </authorList>
    </citation>
    <scope>FUNCTION IN THE DEPHOSPHORYLATION OF PKNB; PKND; PKNE AND PKNF</scope>
    <scope>CATALYTIC ACTIVITY</scope>
    <source>
        <strain>ATCC 25618 / H37Rv</strain>
    </source>
</reference>
<reference key="5">
    <citation type="journal article" date="2006" name="Microbiology">
        <title>The serine/threonine kinase PknB of Mycobacterium tuberculosis phosphorylates PBPA, a penicillin-binding protein required for cell division.</title>
        <authorList>
            <person name="Dasgupta A."/>
            <person name="Datta P."/>
            <person name="Kundu M."/>
            <person name="Basu J."/>
        </authorList>
    </citation>
    <scope>RETRACTED PAPER</scope>
    <source>
        <strain>ATCC 25618 / H37Rv</strain>
    </source>
</reference>
<reference key="6">
    <citation type="journal article" date="2015" name="Microbiology">
        <authorList>
            <person name="Dasgupta A."/>
            <person name="Datta P."/>
            <person name="Kundu M."/>
            <person name="Basu J."/>
        </authorList>
    </citation>
    <scope>RETRACTION NOTICE OF PUBMED:16436437</scope>
</reference>
<reference key="7">
    <citation type="journal article" date="2006" name="FEBS J.">
        <title>EmbR, a regulatory protein with ATPase activity, is a substrate of multiple serine/threonine kinases and phosphatase in Mycobacterium tuberculosis.</title>
        <authorList>
            <person name="Sharma K."/>
            <person name="Gupta M."/>
            <person name="Krupa A."/>
            <person name="Srinivasan N."/>
            <person name="Singh Y."/>
        </authorList>
    </citation>
    <scope>FUNCTION IN THE DEPHOSPHORYLATION OF PKNH AND EMBR</scope>
</reference>
<reference key="8">
    <citation type="journal article" date="2007" name="PLoS Pathog.">
        <title>M. tuberculosis Ser/Thr protein kinase D phosphorylates an anti-anti-sigma factor homolog.</title>
        <authorList>
            <person name="Greenstein A.E."/>
            <person name="MacGurn J.A."/>
            <person name="Baer C.E."/>
            <person name="Falick A.M."/>
            <person name="Cox J.S."/>
            <person name="Alber T."/>
        </authorList>
    </citation>
    <scope>FUNCTION IN THE DEPHOSPHORYLATION OF OPRA/RV0516C</scope>
</reference>
<reference key="9">
    <citation type="journal article" date="2008" name="BMC Syst. Biol.">
        <title>targetTB: a target identification pipeline for Mycobacterium tuberculosis through an interactome, reactome and genome-scale structural analysis.</title>
        <authorList>
            <person name="Raman K."/>
            <person name="Yeturu K."/>
            <person name="Chandra N."/>
        </authorList>
    </citation>
    <scope>IDENTIFICATION AS A DRUG TARGET [LARGE SCALE ANALYSIS]</scope>
</reference>
<reference key="10">
    <citation type="journal article" date="2009" name="J. Biol. Chem.">
        <title>Forkhead-associated domain-containing protein Rv0019c and polyketide-associated protein PapA5, from substrates of serine/threonine protein kinase PknB to interacting proteins of Mycobacterium tuberculosis.</title>
        <authorList>
            <person name="Gupta M."/>
            <person name="Sajid A."/>
            <person name="Arora G."/>
            <person name="Tandon V."/>
            <person name="Singh Y."/>
        </authorList>
    </citation>
    <scope>FUNCTION IN THE DEPHOSPHORYLATION OF PAPA5</scope>
</reference>
<reference key="11">
    <citation type="journal article" date="2010" name="PLoS ONE">
        <title>Understanding the role of PknJ in Mycobacterium tuberculosis: biochemical characterization and identification of novel substrate pyruvate kinase A.</title>
        <authorList>
            <person name="Arora G."/>
            <person name="Sajid A."/>
            <person name="Gupta M."/>
            <person name="Bhaduri A."/>
            <person name="Kumar P."/>
            <person name="Basu-Modak S."/>
            <person name="Singh Y."/>
        </authorList>
    </citation>
    <scope>FUNCTION IN THE DEPHOSPHORYLATION OF PKNJ AND PYK</scope>
    <source>
        <strain>ATCC 25618 / H37Rv</strain>
    </source>
</reference>
<reference key="12">
    <citation type="journal article" date="2011" name="PLoS ONE">
        <title>Phosphorylation of Mycobacterium tuberculosis Ser/Thr phosphatase by PknA and PknB.</title>
        <authorList>
            <person name="Sajid A."/>
            <person name="Arora G."/>
            <person name="Gupta M."/>
            <person name="Upadhyay S."/>
            <person name="Nandicoori V.K."/>
            <person name="Singh Y."/>
        </authorList>
    </citation>
    <scope>FUNCTION IN THE DEPHOSPHORYLATION OF PKNA AND PKNB</scope>
    <scope>ACTIVITY REGULATION</scope>
    <scope>PHOSPHORYLATION AT THR-137; THR-141; THR-174 AND THR-290</scope>
    <scope>MUTAGENESIS OF THR-5; ARG-20; ASP-38; THR-141 AND ASP-229</scope>
    <source>
        <strain>ATCC 25618 / H37Rv</strain>
    </source>
</reference>
<reference key="13">
    <citation type="journal article" date="2011" name="Mol. Cell. Proteomics">
        <title>Proteogenomic analysis of Mycobacterium tuberculosis by high resolution mass spectrometry.</title>
        <authorList>
            <person name="Kelkar D.S."/>
            <person name="Kumar D."/>
            <person name="Kumar P."/>
            <person name="Balakrishnan L."/>
            <person name="Muthusamy B."/>
            <person name="Yadav A.K."/>
            <person name="Shrivastava P."/>
            <person name="Marimuthu A."/>
            <person name="Anand S."/>
            <person name="Sundaram H."/>
            <person name="Kingsbury R."/>
            <person name="Harsha H.C."/>
            <person name="Nair B."/>
            <person name="Prasad T.S."/>
            <person name="Chauhan D.S."/>
            <person name="Katoch K."/>
            <person name="Katoch V.M."/>
            <person name="Kumar P."/>
            <person name="Chaerkady R."/>
            <person name="Ramachandran S."/>
            <person name="Dash D."/>
            <person name="Pandey A."/>
        </authorList>
    </citation>
    <scope>IDENTIFICATION BY MASS SPECTROMETRY [LARGE SCALE ANALYSIS]</scope>
    <source>
        <strain>ATCC 25618 / H37Rv</strain>
    </source>
</reference>
<reference key="14">
    <citation type="journal article" date="2016" name="J. Biol. Chem.">
        <title>Serine/threonine protein phosphatase PstP of Mycobacterium tuberculosis is necessary for accurate cell division and survival of pathogen.</title>
        <authorList>
            <person name="Sharma A.K."/>
            <person name="Arora D."/>
            <person name="Singh L.K."/>
            <person name="Gangwal A."/>
            <person name="Sajid A."/>
            <person name="Molle V."/>
            <person name="Singh Y."/>
            <person name="Nandicoori V.K."/>
        </authorList>
    </citation>
    <scope>FUNCTION IN VIRULENCE</scope>
    <scope>DISRUPTION PHENOTYPE</scope>
    <scope>OVEREXPRESSION</scope>
</reference>
<reference key="15">
    <citation type="journal article" date="2020" name="J. Proteomics">
        <title>Global discovery the PstP interactions using Mtb proteome microarray and revealing novel connections with EthR.</title>
        <authorList>
            <person name="Li K.K."/>
            <person name="Qu D.H."/>
            <person name="Zhang H.N."/>
            <person name="Chen F.Y."/>
            <person name="Xu L."/>
            <person name="Wang M.Y."/>
            <person name="Su H.Y."/>
            <person name="Tao S.C."/>
            <person name="Wu F.L."/>
        </authorList>
    </citation>
    <scope>FUNCTION</scope>
    <scope>INTERACTION WITH ETHR</scope>
    <scope>PROTEOME MICROARRAY</scope>
</reference>
<reference evidence="22" key="16">
    <citation type="journal article" date="2004" name="Structure">
        <title>An alternate conformation and a third metal in PstP/Ppp, the M. tuberculosis PP2C-Family Ser/Thr protein phosphatase.</title>
        <authorList>
            <person name="Pullen K.E."/>
            <person name="Ng H.-L."/>
            <person name="Sung P.-Y."/>
            <person name="Good M.C."/>
            <person name="Smith S.M."/>
            <person name="Alber T."/>
        </authorList>
    </citation>
    <scope>X-RAY CRYSTALLOGRAPHY (1.95 ANGSTROMS) OF 5-237 IN COMPLEX WITH MANGANESE</scope>
    <scope>COFACTOR</scope>
    <scope>MUTAGENESIS OF ASP-118 AND SER-160</scope>
    <source>
        <strain>ATCC 25618 / H37Rv</strain>
    </source>
</reference>
<reference evidence="23" key="17">
    <citation type="journal article" date="2007" name="J. Mol. Biol.">
        <title>Structural and binding studies of the three-metal center in two mycobacterial PPM Ser/Thr protein phosphatases.</title>
        <authorList>
            <person name="Wehenkel A."/>
            <person name="Bellinzoni M."/>
            <person name="Schaeffer F."/>
            <person name="Villarino A."/>
            <person name="Alzari P.M."/>
        </authorList>
    </citation>
    <scope>X-RAY CRYSTALLOGRAPHY (2.00 ANGSTROMS) OF 1-240 IN COMPLEX WITH MANGANESE</scope>
    <scope>COFACTOR</scope>
</reference>
<sequence length="514" mass="53812">MARVTLVLRYAARSDRGLVRANNEDSVYAGARLLALADGMGGHAAGEVASQLVIAALAHLDDDEPGGDLLAKLDAAVRAGNSAIAAQVEMEPDLEGMGTTLTAILFAGNRLGLVHIGDSRGYLLRDGELTQITKDDTFVQTLVDEGRITPEEAHSHPQRSLIMRALTGHEVEPTLTMREARAGDRYLLCSDGLSDPVSDETILEALQIPEVAESAHRLIELALRGGGPDNVTVVVADVVDYDYGQTQPILAGAVSGDDDQLTLPNTAAGRASAISQRKEIVKRVPPQADTFSRPRWSGRRLAFVVALVTVLMTAGLLIGRAIIRSNYYVADYAGSVSIMRGIQGSLLGMSLHQPYLMGCLSPRNELSQISYGQSGGPLDCHLMKLEDLRPPERAQVRAGLPAGTLDDAIGQLRELAANSLLPPCPAPRATSPPGRPAPPTTSETTEPNVTSSPASPSPTTSAPAPTGTTPAIPTSASPAAPASPPTPWPVTSSPTMAALPPPPPQPGIDCRAAA</sequence>
<proteinExistence type="evidence at protein level"/>
<dbReference type="EC" id="3.1.3.16" evidence="4 5 7"/>
<dbReference type="EMBL" id="AL123456">
    <property type="protein sequence ID" value="CCP42740.1"/>
    <property type="molecule type" value="Genomic_DNA"/>
</dbReference>
<dbReference type="PIR" id="H70699">
    <property type="entry name" value="H70699"/>
</dbReference>
<dbReference type="RefSeq" id="NP_214532.1">
    <property type="nucleotide sequence ID" value="NC_000962.3"/>
</dbReference>
<dbReference type="RefSeq" id="WP_010886062.1">
    <property type="nucleotide sequence ID" value="NC_000962.3"/>
</dbReference>
<dbReference type="PDB" id="1TXO">
    <property type="method" value="X-ray"/>
    <property type="resolution" value="1.95 A"/>
    <property type="chains" value="A/B=5-237"/>
</dbReference>
<dbReference type="PDB" id="2CM1">
    <property type="method" value="X-ray"/>
    <property type="resolution" value="2.00 A"/>
    <property type="chains" value="A=1-240"/>
</dbReference>
<dbReference type="PDBsum" id="1TXO"/>
<dbReference type="PDBsum" id="2CM1"/>
<dbReference type="SMR" id="P9WHW5"/>
<dbReference type="FunCoup" id="P9WHW5">
    <property type="interactions" value="2"/>
</dbReference>
<dbReference type="IntAct" id="P9WHW5">
    <property type="interactions" value="2"/>
</dbReference>
<dbReference type="STRING" id="83332.Rv0018c"/>
<dbReference type="iPTMnet" id="P9WHW5"/>
<dbReference type="PaxDb" id="83332-Rv0018c"/>
<dbReference type="GeneID" id="887070"/>
<dbReference type="KEGG" id="mtu:Rv0018c"/>
<dbReference type="KEGG" id="mtv:RVBD_0018c"/>
<dbReference type="PATRIC" id="fig|83332.111.peg.22"/>
<dbReference type="TubercuList" id="Rv0018c"/>
<dbReference type="eggNOG" id="COG0631">
    <property type="taxonomic scope" value="Bacteria"/>
</dbReference>
<dbReference type="eggNOG" id="COG3266">
    <property type="taxonomic scope" value="Bacteria"/>
</dbReference>
<dbReference type="InParanoid" id="P9WHW5"/>
<dbReference type="OrthoDB" id="9801841at2"/>
<dbReference type="PhylomeDB" id="P9WHW5"/>
<dbReference type="BRENDA" id="3.1.3.16">
    <property type="organism ID" value="3445"/>
</dbReference>
<dbReference type="CD-CODE" id="00EEF43C">
    <property type="entry name" value="Synthetic Condensate 000314"/>
</dbReference>
<dbReference type="EvolutionaryTrace" id="P9WHW5"/>
<dbReference type="Proteomes" id="UP000001584">
    <property type="component" value="Chromosome"/>
</dbReference>
<dbReference type="GO" id="GO:0016020">
    <property type="term" value="C:membrane"/>
    <property type="evidence" value="ECO:0000314"/>
    <property type="project" value="MTBBASE"/>
</dbReference>
<dbReference type="GO" id="GO:0009274">
    <property type="term" value="C:peptidoglycan-based cell wall"/>
    <property type="evidence" value="ECO:0007005"/>
    <property type="project" value="MTBBASE"/>
</dbReference>
<dbReference type="GO" id="GO:0005886">
    <property type="term" value="C:plasma membrane"/>
    <property type="evidence" value="ECO:0007005"/>
    <property type="project" value="MTBBASE"/>
</dbReference>
<dbReference type="GO" id="GO:0000287">
    <property type="term" value="F:magnesium ion binding"/>
    <property type="evidence" value="ECO:0000314"/>
    <property type="project" value="MTBBASE"/>
</dbReference>
<dbReference type="GO" id="GO:0030145">
    <property type="term" value="F:manganese ion binding"/>
    <property type="evidence" value="ECO:0000314"/>
    <property type="project" value="MTBBASE"/>
</dbReference>
<dbReference type="GO" id="GO:0004721">
    <property type="term" value="F:phosphoprotein phosphatase activity"/>
    <property type="evidence" value="ECO:0000314"/>
    <property type="project" value="MTBBASE"/>
</dbReference>
<dbReference type="GO" id="GO:0004722">
    <property type="term" value="F:protein serine/threonine phosphatase activity"/>
    <property type="evidence" value="ECO:0000314"/>
    <property type="project" value="GO_Central"/>
</dbReference>
<dbReference type="GO" id="GO:0006355">
    <property type="term" value="P:regulation of DNA-templated transcription"/>
    <property type="evidence" value="ECO:0000314"/>
    <property type="project" value="UniProtKB"/>
</dbReference>
<dbReference type="GO" id="GO:0007165">
    <property type="term" value="P:signal transduction"/>
    <property type="evidence" value="ECO:0000318"/>
    <property type="project" value="GO_Central"/>
</dbReference>
<dbReference type="CDD" id="cd00143">
    <property type="entry name" value="PP2Cc"/>
    <property type="match status" value="1"/>
</dbReference>
<dbReference type="FunFam" id="3.60.40.10:FF:000002">
    <property type="entry name" value="Serine/threonine phosphatase stp"/>
    <property type="match status" value="1"/>
</dbReference>
<dbReference type="Gene3D" id="3.60.40.10">
    <property type="entry name" value="PPM-type phosphatase domain"/>
    <property type="match status" value="1"/>
</dbReference>
<dbReference type="InterPro" id="IPR036457">
    <property type="entry name" value="PPM-type-like_dom_sf"/>
</dbReference>
<dbReference type="InterPro" id="IPR001932">
    <property type="entry name" value="PPM-type_phosphatase-like_dom"/>
</dbReference>
<dbReference type="Pfam" id="PF13672">
    <property type="entry name" value="PP2C_2"/>
    <property type="match status" value="1"/>
</dbReference>
<dbReference type="SMART" id="SM00331">
    <property type="entry name" value="PP2C_SIG"/>
    <property type="match status" value="1"/>
</dbReference>
<dbReference type="SMART" id="SM00332">
    <property type="entry name" value="PP2Cc"/>
    <property type="match status" value="1"/>
</dbReference>
<dbReference type="SUPFAM" id="SSF81606">
    <property type="entry name" value="PP2C-like"/>
    <property type="match status" value="1"/>
</dbReference>
<dbReference type="PROSITE" id="PS51746">
    <property type="entry name" value="PPM_2"/>
    <property type="match status" value="1"/>
</dbReference>
<feature type="chain" id="PRO_0000344805" description="Serine/threonine protein phosphatase PstP">
    <location>
        <begin position="1"/>
        <end position="514"/>
    </location>
</feature>
<feature type="topological domain" description="Cytoplasmic" evidence="19">
    <location>
        <begin position="1"/>
        <end position="302"/>
    </location>
</feature>
<feature type="transmembrane region" description="Helical" evidence="1">
    <location>
        <begin position="303"/>
        <end position="323"/>
    </location>
</feature>
<feature type="topological domain" description="Extracellular" evidence="19">
    <location>
        <begin position="324"/>
        <end position="514"/>
    </location>
</feature>
<feature type="domain" description="PPM-type phosphatase" evidence="2">
    <location>
        <begin position="9"/>
        <end position="238"/>
    </location>
</feature>
<feature type="region of interest" description="Disordered" evidence="3">
    <location>
        <begin position="420"/>
        <end position="514"/>
    </location>
</feature>
<feature type="compositionally biased region" description="Low complexity" evidence="3">
    <location>
        <begin position="440"/>
        <end position="480"/>
    </location>
</feature>
<feature type="binding site" evidence="6 10 22 23">
    <location>
        <position position="38"/>
    </location>
    <ligand>
        <name>Mn(2+)</name>
        <dbReference type="ChEBI" id="CHEBI:29035"/>
        <label>1</label>
    </ligand>
</feature>
<feature type="binding site" evidence="6 10 22 23">
    <location>
        <position position="38"/>
    </location>
    <ligand>
        <name>Mn(2+)</name>
        <dbReference type="ChEBI" id="CHEBI:29035"/>
        <label>2</label>
    </ligand>
</feature>
<feature type="binding site" evidence="6 10 22 23">
    <location>
        <position position="39"/>
    </location>
    <ligand>
        <name>Mn(2+)</name>
        <dbReference type="ChEBI" id="CHEBI:29035"/>
        <label>1</label>
    </ligand>
</feature>
<feature type="binding site" evidence="6 22">
    <location>
        <position position="118"/>
    </location>
    <ligand>
        <name>Mn(2+)</name>
        <dbReference type="ChEBI" id="CHEBI:29035"/>
        <label>3</label>
    </ligand>
</feature>
<feature type="binding site" evidence="6 22">
    <location>
        <position position="160"/>
    </location>
    <ligand>
        <name>Mn(2+)</name>
        <dbReference type="ChEBI" id="CHEBI:29035"/>
        <label>3</label>
    </ligand>
</feature>
<feature type="binding site" evidence="6 10 22 23">
    <location>
        <position position="191"/>
    </location>
    <ligand>
        <name>Mn(2+)</name>
        <dbReference type="ChEBI" id="CHEBI:29035"/>
        <label>2</label>
    </ligand>
</feature>
<feature type="binding site" evidence="6 22">
    <location>
        <position position="191"/>
    </location>
    <ligand>
        <name>Mn(2+)</name>
        <dbReference type="ChEBI" id="CHEBI:29035"/>
        <label>3</label>
    </ligand>
</feature>
<feature type="binding site" evidence="6 10 22 23">
    <location>
        <position position="229"/>
    </location>
    <ligand>
        <name>Mn(2+)</name>
        <dbReference type="ChEBI" id="CHEBI:29035"/>
        <label>2</label>
    </ligand>
</feature>
<feature type="modified residue" description="Phosphothreonine; by PknA and PknB" evidence="14">
    <location>
        <position position="137"/>
    </location>
</feature>
<feature type="modified residue" description="Phosphothreonine; by PknB" evidence="14">
    <location>
        <position position="141"/>
    </location>
</feature>
<feature type="modified residue" description="Phosphothreonine; by PknA and PknB" evidence="14">
    <location>
        <position position="174"/>
    </location>
</feature>
<feature type="modified residue" description="Phosphothreonine; by PknB" evidence="14">
    <location>
        <position position="290"/>
    </location>
</feature>
<feature type="mutagenesis site" description="No change in activity." evidence="14">
    <original>T</original>
    <variation>A</variation>
    <location>
        <position position="5"/>
    </location>
</feature>
<feature type="mutagenesis site" description="60% loss of phosphatase activity." evidence="14">
    <original>R</original>
    <variation>G</variation>
    <location>
        <position position="20"/>
    </location>
</feature>
<feature type="mutagenesis site" description="90% loss of phosphatase activity." evidence="14">
    <original>D</original>
    <variation>G</variation>
    <location>
        <position position="38"/>
    </location>
</feature>
<feature type="mutagenesis site" description="Decreases affinity for Mn3 by 4-fold, no effect on hydrolysis of p-nitrophenyl phosphate." evidence="6">
    <original>D</original>
    <variation>N</variation>
    <location>
        <position position="118"/>
    </location>
</feature>
<feature type="mutagenesis site" description="No change in activity." evidence="14">
    <original>T</original>
    <variation>E</variation>
    <location>
        <position position="141"/>
    </location>
</feature>
<feature type="mutagenesis site" description="No change in affinity for Mn3, no effect on hydrolysis of p-nitrophenyl phosphate." evidence="6">
    <original>S</original>
    <variation>A</variation>
    <location>
        <position position="160"/>
    </location>
</feature>
<feature type="mutagenesis site" description="90% loss of phosphatase activity." evidence="14">
    <original>D</original>
    <variation>G</variation>
    <location>
        <position position="229"/>
    </location>
</feature>
<feature type="strand" evidence="24">
    <location>
        <begin position="7"/>
        <end position="15"/>
    </location>
</feature>
<feature type="strand" evidence="24">
    <location>
        <begin position="25"/>
        <end position="29"/>
    </location>
</feature>
<feature type="strand" evidence="24">
    <location>
        <begin position="31"/>
        <end position="40"/>
    </location>
</feature>
<feature type="turn" evidence="24">
    <location>
        <begin position="42"/>
        <end position="44"/>
    </location>
</feature>
<feature type="helix" evidence="24">
    <location>
        <begin position="45"/>
        <end position="57"/>
    </location>
</feature>
<feature type="helix" evidence="24">
    <location>
        <begin position="58"/>
        <end position="61"/>
    </location>
</feature>
<feature type="helix" evidence="24">
    <location>
        <begin position="69"/>
        <end position="90"/>
    </location>
</feature>
<feature type="helix" evidence="24">
    <location>
        <begin position="92"/>
        <end position="94"/>
    </location>
</feature>
<feature type="strand" evidence="24">
    <location>
        <begin position="101"/>
        <end position="107"/>
    </location>
</feature>
<feature type="strand" evidence="24">
    <location>
        <begin position="110"/>
        <end position="118"/>
    </location>
</feature>
<feature type="strand" evidence="24">
    <location>
        <begin position="120"/>
        <end position="125"/>
    </location>
</feature>
<feature type="strand" evidence="24">
    <location>
        <begin position="128"/>
        <end position="131"/>
    </location>
</feature>
<feature type="helix" evidence="24">
    <location>
        <begin position="138"/>
        <end position="144"/>
    </location>
</feature>
<feature type="helix" evidence="24">
    <location>
        <begin position="152"/>
        <end position="155"/>
    </location>
</feature>
<feature type="turn" evidence="24">
    <location>
        <begin position="157"/>
        <end position="160"/>
    </location>
</feature>
<feature type="strand" evidence="24">
    <location>
        <begin position="166"/>
        <end position="169"/>
    </location>
</feature>
<feature type="strand" evidence="24">
    <location>
        <begin position="174"/>
        <end position="179"/>
    </location>
</feature>
<feature type="strand" evidence="24">
    <location>
        <begin position="185"/>
        <end position="189"/>
    </location>
</feature>
<feature type="helix" evidence="24">
    <location>
        <begin position="191"/>
        <end position="194"/>
    </location>
</feature>
<feature type="helix" evidence="24">
    <location>
        <begin position="199"/>
        <end position="206"/>
    </location>
</feature>
<feature type="strand" evidence="24">
    <location>
        <begin position="208"/>
        <end position="210"/>
    </location>
</feature>
<feature type="helix" evidence="24">
    <location>
        <begin position="211"/>
        <end position="224"/>
    </location>
</feature>
<feature type="strand" evidence="24">
    <location>
        <begin position="231"/>
        <end position="239"/>
    </location>
</feature>
<accession>P9WHW5</accession>
<accession>L0T2B3</accession>
<accession>P71588</accession>
<accession>Q8VKT2</accession>
<keyword id="KW-0002">3D-structure</keyword>
<keyword id="KW-1003">Cell membrane</keyword>
<keyword id="KW-0378">Hydrolase</keyword>
<keyword id="KW-0464">Manganese</keyword>
<keyword id="KW-0472">Membrane</keyword>
<keyword id="KW-0479">Metal-binding</keyword>
<keyword id="KW-0597">Phosphoprotein</keyword>
<keyword id="KW-0904">Protein phosphatase</keyword>
<keyword id="KW-1185">Reference proteome</keyword>
<keyword id="KW-0812">Transmembrane</keyword>
<keyword id="KW-1133">Transmembrane helix</keyword>
<evidence type="ECO:0000255" key="1"/>
<evidence type="ECO:0000255" key="2">
    <source>
        <dbReference type="PROSITE-ProRule" id="PRU01082"/>
    </source>
</evidence>
<evidence type="ECO:0000256" key="3">
    <source>
        <dbReference type="SAM" id="MobiDB-lite"/>
    </source>
</evidence>
<evidence type="ECO:0000269" key="4">
    <source>
    </source>
</evidence>
<evidence type="ECO:0000269" key="5">
    <source>
    </source>
</evidence>
<evidence type="ECO:0000269" key="6">
    <source>
    </source>
</evidence>
<evidence type="ECO:0000269" key="7">
    <source>
    </source>
</evidence>
<evidence type="ECO:0000269" key="8">
    <source>
    </source>
</evidence>
<evidence type="ECO:0000269" key="9">
    <source>
    </source>
</evidence>
<evidence type="ECO:0000269" key="10">
    <source>
    </source>
</evidence>
<evidence type="ECO:0000269" key="11">
    <source>
    </source>
</evidence>
<evidence type="ECO:0000269" key="12">
    <source>
    </source>
</evidence>
<evidence type="ECO:0000269" key="13">
    <source>
    </source>
</evidence>
<evidence type="ECO:0000269" key="14">
    <source>
    </source>
</evidence>
<evidence type="ECO:0000269" key="15">
    <source>
    </source>
</evidence>
<evidence type="ECO:0000269" key="16">
    <source>
    </source>
</evidence>
<evidence type="ECO:0000303" key="17">
    <source>
    </source>
</evidence>
<evidence type="ECO:0000303" key="18">
    <source>
    </source>
</evidence>
<evidence type="ECO:0000305" key="19"/>
<evidence type="ECO:0000305" key="20">
    <source>
    </source>
</evidence>
<evidence type="ECO:0000305" key="21">
    <source>
    </source>
</evidence>
<evidence type="ECO:0007744" key="22">
    <source>
        <dbReference type="PDB" id="1TXO"/>
    </source>
</evidence>
<evidence type="ECO:0007744" key="23">
    <source>
        <dbReference type="PDB" id="2CM1"/>
    </source>
</evidence>
<evidence type="ECO:0007829" key="24">
    <source>
        <dbReference type="PDB" id="1TXO"/>
    </source>
</evidence>